<organism>
    <name type="scientific">Arthrobacter sp. (strain FB24)</name>
    <dbReference type="NCBI Taxonomy" id="290399"/>
    <lineage>
        <taxon>Bacteria</taxon>
        <taxon>Bacillati</taxon>
        <taxon>Actinomycetota</taxon>
        <taxon>Actinomycetes</taxon>
        <taxon>Micrococcales</taxon>
        <taxon>Micrococcaceae</taxon>
        <taxon>Arthrobacter</taxon>
    </lineage>
</organism>
<reference key="1">
    <citation type="journal article" date="2013" name="Stand. Genomic Sci.">
        <title>Complete genome sequence of Arthrobacter sp. strain FB24.</title>
        <authorList>
            <person name="Nakatsu C.H."/>
            <person name="Barabote R."/>
            <person name="Thompson S."/>
            <person name="Bruce D."/>
            <person name="Detter C."/>
            <person name="Brettin T."/>
            <person name="Han C."/>
            <person name="Beasley F."/>
            <person name="Chen W."/>
            <person name="Konopka A."/>
            <person name="Xie G."/>
        </authorList>
    </citation>
    <scope>NUCLEOTIDE SEQUENCE [LARGE SCALE GENOMIC DNA]</scope>
    <source>
        <strain>FB24</strain>
    </source>
</reference>
<protein>
    <recommendedName>
        <fullName evidence="2">D-alanine--D-alanine ligase</fullName>
        <ecNumber evidence="2">6.3.2.4</ecNumber>
    </recommendedName>
    <alternativeName>
        <fullName evidence="2">D-Ala-D-Ala ligase</fullName>
    </alternativeName>
    <alternativeName>
        <fullName evidence="2">D-alanylalanine synthetase</fullName>
    </alternativeName>
</protein>
<name>DDL_ARTS2</name>
<gene>
    <name evidence="2" type="primary">ddl</name>
    <name type="ordered locus">Arth_2514</name>
</gene>
<comment type="function">
    <text evidence="2">Cell wall formation.</text>
</comment>
<comment type="catalytic activity">
    <reaction evidence="2">
        <text>2 D-alanine + ATP = D-alanyl-D-alanine + ADP + phosphate + H(+)</text>
        <dbReference type="Rhea" id="RHEA:11224"/>
        <dbReference type="ChEBI" id="CHEBI:15378"/>
        <dbReference type="ChEBI" id="CHEBI:30616"/>
        <dbReference type="ChEBI" id="CHEBI:43474"/>
        <dbReference type="ChEBI" id="CHEBI:57416"/>
        <dbReference type="ChEBI" id="CHEBI:57822"/>
        <dbReference type="ChEBI" id="CHEBI:456216"/>
        <dbReference type="EC" id="6.3.2.4"/>
    </reaction>
</comment>
<comment type="cofactor">
    <cofactor evidence="1">
        <name>Mg(2+)</name>
        <dbReference type="ChEBI" id="CHEBI:18420"/>
    </cofactor>
    <cofactor evidence="1">
        <name>Mn(2+)</name>
        <dbReference type="ChEBI" id="CHEBI:29035"/>
    </cofactor>
    <text evidence="1">Binds 2 magnesium or manganese ions per subunit.</text>
</comment>
<comment type="pathway">
    <text evidence="2">Cell wall biogenesis; peptidoglycan biosynthesis.</text>
</comment>
<comment type="subcellular location">
    <subcellularLocation>
        <location evidence="2">Cytoplasm</location>
    </subcellularLocation>
</comment>
<comment type="similarity">
    <text evidence="2">Belongs to the D-alanine--D-alanine ligase family.</text>
</comment>
<dbReference type="EC" id="6.3.2.4" evidence="2"/>
<dbReference type="EMBL" id="CP000454">
    <property type="protein sequence ID" value="ABK03893.1"/>
    <property type="molecule type" value="Genomic_DNA"/>
</dbReference>
<dbReference type="RefSeq" id="WP_011692355.1">
    <property type="nucleotide sequence ID" value="NC_008541.1"/>
</dbReference>
<dbReference type="SMR" id="A0JXX3"/>
<dbReference type="STRING" id="290399.Arth_2514"/>
<dbReference type="KEGG" id="art:Arth_2514"/>
<dbReference type="eggNOG" id="COG1181">
    <property type="taxonomic scope" value="Bacteria"/>
</dbReference>
<dbReference type="HOGENOM" id="CLU_039268_0_0_11"/>
<dbReference type="OrthoDB" id="9813261at2"/>
<dbReference type="UniPathway" id="UPA00219"/>
<dbReference type="Proteomes" id="UP000000754">
    <property type="component" value="Chromosome"/>
</dbReference>
<dbReference type="GO" id="GO:0005829">
    <property type="term" value="C:cytosol"/>
    <property type="evidence" value="ECO:0007669"/>
    <property type="project" value="TreeGrafter"/>
</dbReference>
<dbReference type="GO" id="GO:0005524">
    <property type="term" value="F:ATP binding"/>
    <property type="evidence" value="ECO:0007669"/>
    <property type="project" value="UniProtKB-KW"/>
</dbReference>
<dbReference type="GO" id="GO:0008716">
    <property type="term" value="F:D-alanine-D-alanine ligase activity"/>
    <property type="evidence" value="ECO:0007669"/>
    <property type="project" value="UniProtKB-UniRule"/>
</dbReference>
<dbReference type="GO" id="GO:0046872">
    <property type="term" value="F:metal ion binding"/>
    <property type="evidence" value="ECO:0007669"/>
    <property type="project" value="UniProtKB-KW"/>
</dbReference>
<dbReference type="GO" id="GO:0071555">
    <property type="term" value="P:cell wall organization"/>
    <property type="evidence" value="ECO:0007669"/>
    <property type="project" value="UniProtKB-KW"/>
</dbReference>
<dbReference type="GO" id="GO:0009252">
    <property type="term" value="P:peptidoglycan biosynthetic process"/>
    <property type="evidence" value="ECO:0007669"/>
    <property type="project" value="UniProtKB-UniRule"/>
</dbReference>
<dbReference type="GO" id="GO:0008360">
    <property type="term" value="P:regulation of cell shape"/>
    <property type="evidence" value="ECO:0007669"/>
    <property type="project" value="UniProtKB-KW"/>
</dbReference>
<dbReference type="FunFam" id="3.30.1490.20:FF:000007">
    <property type="entry name" value="D-alanine--D-alanine ligase"/>
    <property type="match status" value="1"/>
</dbReference>
<dbReference type="FunFam" id="3.30.470.20:FF:000008">
    <property type="entry name" value="D-alanine--D-alanine ligase"/>
    <property type="match status" value="1"/>
</dbReference>
<dbReference type="Gene3D" id="3.40.50.20">
    <property type="match status" value="1"/>
</dbReference>
<dbReference type="Gene3D" id="3.30.1490.20">
    <property type="entry name" value="ATP-grasp fold, A domain"/>
    <property type="match status" value="1"/>
</dbReference>
<dbReference type="Gene3D" id="3.30.470.20">
    <property type="entry name" value="ATP-grasp fold, B domain"/>
    <property type="match status" value="1"/>
</dbReference>
<dbReference type="HAMAP" id="MF_00047">
    <property type="entry name" value="Dala_Dala_lig"/>
    <property type="match status" value="1"/>
</dbReference>
<dbReference type="InterPro" id="IPR011761">
    <property type="entry name" value="ATP-grasp"/>
</dbReference>
<dbReference type="InterPro" id="IPR013815">
    <property type="entry name" value="ATP_grasp_subdomain_1"/>
</dbReference>
<dbReference type="InterPro" id="IPR000291">
    <property type="entry name" value="D-Ala_lig_Van_CS"/>
</dbReference>
<dbReference type="InterPro" id="IPR005905">
    <property type="entry name" value="D_ala_D_ala"/>
</dbReference>
<dbReference type="InterPro" id="IPR011095">
    <property type="entry name" value="Dala_Dala_lig_C"/>
</dbReference>
<dbReference type="InterPro" id="IPR011127">
    <property type="entry name" value="Dala_Dala_lig_N"/>
</dbReference>
<dbReference type="InterPro" id="IPR016185">
    <property type="entry name" value="PreATP-grasp_dom_sf"/>
</dbReference>
<dbReference type="NCBIfam" id="TIGR01205">
    <property type="entry name" value="D_ala_D_alaTIGR"/>
    <property type="match status" value="1"/>
</dbReference>
<dbReference type="NCBIfam" id="NF002528">
    <property type="entry name" value="PRK01966.1-4"/>
    <property type="match status" value="1"/>
</dbReference>
<dbReference type="PANTHER" id="PTHR23132">
    <property type="entry name" value="D-ALANINE--D-ALANINE LIGASE"/>
    <property type="match status" value="1"/>
</dbReference>
<dbReference type="PANTHER" id="PTHR23132:SF25">
    <property type="entry name" value="D-ALANINE--D-ALANINE LIGASE A"/>
    <property type="match status" value="1"/>
</dbReference>
<dbReference type="Pfam" id="PF07478">
    <property type="entry name" value="Dala_Dala_lig_C"/>
    <property type="match status" value="1"/>
</dbReference>
<dbReference type="Pfam" id="PF01820">
    <property type="entry name" value="Dala_Dala_lig_N"/>
    <property type="match status" value="1"/>
</dbReference>
<dbReference type="PIRSF" id="PIRSF039102">
    <property type="entry name" value="Ddl/VanB"/>
    <property type="match status" value="1"/>
</dbReference>
<dbReference type="SUPFAM" id="SSF56059">
    <property type="entry name" value="Glutathione synthetase ATP-binding domain-like"/>
    <property type="match status" value="1"/>
</dbReference>
<dbReference type="SUPFAM" id="SSF52440">
    <property type="entry name" value="PreATP-grasp domain"/>
    <property type="match status" value="1"/>
</dbReference>
<dbReference type="PROSITE" id="PS50975">
    <property type="entry name" value="ATP_GRASP"/>
    <property type="match status" value="1"/>
</dbReference>
<dbReference type="PROSITE" id="PS00843">
    <property type="entry name" value="DALA_DALA_LIGASE_1"/>
    <property type="match status" value="1"/>
</dbReference>
<dbReference type="PROSITE" id="PS00844">
    <property type="entry name" value="DALA_DALA_LIGASE_2"/>
    <property type="match status" value="1"/>
</dbReference>
<proteinExistence type="inferred from homology"/>
<evidence type="ECO:0000250" key="1"/>
<evidence type="ECO:0000255" key="2">
    <source>
        <dbReference type="HAMAP-Rule" id="MF_00047"/>
    </source>
</evidence>
<sequence>MSEEQLNKHTAPGHAKPRVAVLFGGRSSEHAVSCVTAAGVLGAIDYDKYDVIPIGIAKTGQWVLVSGDTRQWSLSASSLPEVSPSARTVTLAEIGGEHQLIVASPNEVPQELGAVDVVFPLLHGPFGEDGTIQGLLELSDTRYVGAGVLASAVGMDKHYMKVVFEAAGLQVGPYIAVTDRQWLTDPEAIRKRVDRLGYPVFVKPARAGSSMGISKVDSLEGLDAAIAAAREHDLKLVIEAGIVGREIECAVLEGRGTEPPRTSMPGEIAVAPGEHEFYDFNAKYVEDDAASLSCPADLPDEAIARVRELAAAAFDAVGAEGLSRVDFFYTPDGELIINEINTMPGFTPKSMYPQMWAASGLGYAELIDELIYLALNRKTGLR</sequence>
<accession>A0JXX3</accession>
<keyword id="KW-0067">ATP-binding</keyword>
<keyword id="KW-0133">Cell shape</keyword>
<keyword id="KW-0961">Cell wall biogenesis/degradation</keyword>
<keyword id="KW-0963">Cytoplasm</keyword>
<keyword id="KW-0436">Ligase</keyword>
<keyword id="KW-0460">Magnesium</keyword>
<keyword id="KW-0464">Manganese</keyword>
<keyword id="KW-0479">Metal-binding</keyword>
<keyword id="KW-0547">Nucleotide-binding</keyword>
<keyword id="KW-0573">Peptidoglycan synthesis</keyword>
<keyword id="KW-1185">Reference proteome</keyword>
<feature type="chain" id="PRO_0000341054" description="D-alanine--D-alanine ligase">
    <location>
        <begin position="1"/>
        <end position="382"/>
    </location>
</feature>
<feature type="domain" description="ATP-grasp" evidence="2">
    <location>
        <begin position="161"/>
        <end position="372"/>
    </location>
</feature>
<feature type="binding site" evidence="2">
    <location>
        <begin position="193"/>
        <end position="248"/>
    </location>
    <ligand>
        <name>ATP</name>
        <dbReference type="ChEBI" id="CHEBI:30616"/>
    </ligand>
</feature>
<feature type="binding site" evidence="2">
    <location>
        <position position="326"/>
    </location>
    <ligand>
        <name>Mg(2+)</name>
        <dbReference type="ChEBI" id="CHEBI:18420"/>
        <label>1</label>
    </ligand>
</feature>
<feature type="binding site" evidence="2">
    <location>
        <position position="339"/>
    </location>
    <ligand>
        <name>Mg(2+)</name>
        <dbReference type="ChEBI" id="CHEBI:18420"/>
        <label>1</label>
    </ligand>
</feature>
<feature type="binding site" evidence="2">
    <location>
        <position position="339"/>
    </location>
    <ligand>
        <name>Mg(2+)</name>
        <dbReference type="ChEBI" id="CHEBI:18420"/>
        <label>2</label>
    </ligand>
</feature>
<feature type="binding site" evidence="2">
    <location>
        <position position="341"/>
    </location>
    <ligand>
        <name>Mg(2+)</name>
        <dbReference type="ChEBI" id="CHEBI:18420"/>
        <label>2</label>
    </ligand>
</feature>